<comment type="function">
    <text evidence="1">DNA ligase that catalyzes the formation of phosphodiester linkages between 5'-phosphoryl and 3'-hydroxyl groups in double-stranded DNA using NAD as a coenzyme and as the energy source for the reaction. It is essential for DNA replication and repair of damaged DNA.</text>
</comment>
<comment type="catalytic activity">
    <reaction evidence="1">
        <text>NAD(+) + (deoxyribonucleotide)n-3'-hydroxyl + 5'-phospho-(deoxyribonucleotide)m = (deoxyribonucleotide)n+m + AMP + beta-nicotinamide D-nucleotide.</text>
        <dbReference type="EC" id="6.5.1.2"/>
    </reaction>
</comment>
<comment type="cofactor">
    <cofactor evidence="1">
        <name>Mg(2+)</name>
        <dbReference type="ChEBI" id="CHEBI:18420"/>
    </cofactor>
    <cofactor evidence="1">
        <name>Mn(2+)</name>
        <dbReference type="ChEBI" id="CHEBI:29035"/>
    </cofactor>
</comment>
<comment type="similarity">
    <text evidence="1">Belongs to the NAD-dependent DNA ligase family. LigA subfamily.</text>
</comment>
<organism>
    <name type="scientific">Clostridium kluyveri (strain NBRC 12016)</name>
    <dbReference type="NCBI Taxonomy" id="583346"/>
    <lineage>
        <taxon>Bacteria</taxon>
        <taxon>Bacillati</taxon>
        <taxon>Bacillota</taxon>
        <taxon>Clostridia</taxon>
        <taxon>Eubacteriales</taxon>
        <taxon>Clostridiaceae</taxon>
        <taxon>Clostridium</taxon>
    </lineage>
</organism>
<reference key="1">
    <citation type="submission" date="2005-09" db="EMBL/GenBank/DDBJ databases">
        <title>Complete genome sequence of Clostridium kluyveri and comparative genomics of Clostridia species.</title>
        <authorList>
            <person name="Inui M."/>
            <person name="Nonaka H."/>
            <person name="Shinoda Y."/>
            <person name="Ikenaga Y."/>
            <person name="Abe M."/>
            <person name="Naito K."/>
            <person name="Vertes A.A."/>
            <person name="Yukawa H."/>
        </authorList>
    </citation>
    <scope>NUCLEOTIDE SEQUENCE [LARGE SCALE GENOMIC DNA]</scope>
    <source>
        <strain>NBRC 12016</strain>
    </source>
</reference>
<sequence>MDIKKRIDELRKIIEYHNDKYYNQDDPEITDYEYDKLYVELRNLENSHPEYKIQSSPTQKVGGTVKRELRKVKHDIPVVSLQDVFSKEEVYSFVEKITSEVTYPKFVVEKKIDGLTVVLRYYNGELKEAITRGDGSIGESVFENILQVKSIPKHIPSKLNYLEIRGEIYMTNENFIKVNEKQEEIGGKIFKNPRNLAAGTIRQLDTSIVKDRNLDIFIFNLEISEGKKFETHSETLEWLSNQGFDVSPNFKICETADEVWNAILDIEESRWDLGYSIDGAVVKVDNLNDRISLGMTSKVPKWTVAFKYPPEQKETVIEDIIVQVSRTGRLNPLALLRPVILANTTISKATLHNQDFIDSKDIRIGDTVIIQKAGDIIPEIIRSIPEKRPDWAKKYIIPDVCPVCNSKTIREPDGVDTRCSNPDCEAQSFRKIGYFVSKDAMNIVGFGQNTVEALMKDGYIKKISDIYILKNYKDALIEKGIIGKEKSVNNLLNAIELSKDNDIDRLITGLGIRNVGKQSAKILAGNFKSMDELAGAAYEQLIELEDFGPTTVPDILEFFNSNAYIELIKKLKEAGVNTISKTLQKKIDNRFLGKTFVITGTLPTMKRDEAAEIIQSFGGKVSGSVSKRTSFVLAGEEAGSKLTKAQQLGISIITEEDLKDMIK</sequence>
<proteinExistence type="inferred from homology"/>
<name>DNLJ_CLOK1</name>
<evidence type="ECO:0000255" key="1">
    <source>
        <dbReference type="HAMAP-Rule" id="MF_01588"/>
    </source>
</evidence>
<keyword id="KW-0227">DNA damage</keyword>
<keyword id="KW-0234">DNA repair</keyword>
<keyword id="KW-0235">DNA replication</keyword>
<keyword id="KW-0436">Ligase</keyword>
<keyword id="KW-0460">Magnesium</keyword>
<keyword id="KW-0464">Manganese</keyword>
<keyword id="KW-0479">Metal-binding</keyword>
<keyword id="KW-0520">NAD</keyword>
<keyword id="KW-0862">Zinc</keyword>
<feature type="chain" id="PRO_0000380346" description="DNA ligase">
    <location>
        <begin position="1"/>
        <end position="663"/>
    </location>
</feature>
<feature type="domain" description="BRCT" evidence="1">
    <location>
        <begin position="586"/>
        <end position="663"/>
    </location>
</feature>
<feature type="active site" description="N6-AMP-lysine intermediate" evidence="1">
    <location>
        <position position="111"/>
    </location>
</feature>
<feature type="binding site" evidence="1">
    <location>
        <begin position="31"/>
        <end position="35"/>
    </location>
    <ligand>
        <name>NAD(+)</name>
        <dbReference type="ChEBI" id="CHEBI:57540"/>
    </ligand>
</feature>
<feature type="binding site" evidence="1">
    <location>
        <begin position="80"/>
        <end position="81"/>
    </location>
    <ligand>
        <name>NAD(+)</name>
        <dbReference type="ChEBI" id="CHEBI:57540"/>
    </ligand>
</feature>
<feature type="binding site" evidence="1">
    <location>
        <position position="109"/>
    </location>
    <ligand>
        <name>NAD(+)</name>
        <dbReference type="ChEBI" id="CHEBI:57540"/>
    </ligand>
</feature>
<feature type="binding site" evidence="1">
    <location>
        <position position="132"/>
    </location>
    <ligand>
        <name>NAD(+)</name>
        <dbReference type="ChEBI" id="CHEBI:57540"/>
    </ligand>
</feature>
<feature type="binding site" evidence="1">
    <location>
        <position position="167"/>
    </location>
    <ligand>
        <name>NAD(+)</name>
        <dbReference type="ChEBI" id="CHEBI:57540"/>
    </ligand>
</feature>
<feature type="binding site" evidence="1">
    <location>
        <position position="283"/>
    </location>
    <ligand>
        <name>NAD(+)</name>
        <dbReference type="ChEBI" id="CHEBI:57540"/>
    </ligand>
</feature>
<feature type="binding site" evidence="1">
    <location>
        <position position="307"/>
    </location>
    <ligand>
        <name>NAD(+)</name>
        <dbReference type="ChEBI" id="CHEBI:57540"/>
    </ligand>
</feature>
<feature type="binding site" evidence="1">
    <location>
        <position position="401"/>
    </location>
    <ligand>
        <name>Zn(2+)</name>
        <dbReference type="ChEBI" id="CHEBI:29105"/>
    </ligand>
</feature>
<feature type="binding site" evidence="1">
    <location>
        <position position="404"/>
    </location>
    <ligand>
        <name>Zn(2+)</name>
        <dbReference type="ChEBI" id="CHEBI:29105"/>
    </ligand>
</feature>
<feature type="binding site" evidence="1">
    <location>
        <position position="419"/>
    </location>
    <ligand>
        <name>Zn(2+)</name>
        <dbReference type="ChEBI" id="CHEBI:29105"/>
    </ligand>
</feature>
<feature type="binding site" evidence="1">
    <location>
        <position position="424"/>
    </location>
    <ligand>
        <name>Zn(2+)</name>
        <dbReference type="ChEBI" id="CHEBI:29105"/>
    </ligand>
</feature>
<accession>B9DWM9</accession>
<gene>
    <name evidence="1" type="primary">ligA</name>
    <name type="ordered locus">CKR_3071</name>
</gene>
<protein>
    <recommendedName>
        <fullName evidence="1">DNA ligase</fullName>
        <ecNumber evidence="1">6.5.1.2</ecNumber>
    </recommendedName>
    <alternativeName>
        <fullName evidence="1">Polydeoxyribonucleotide synthase [NAD(+)]</fullName>
    </alternativeName>
</protein>
<dbReference type="EC" id="6.5.1.2" evidence="1"/>
<dbReference type="EMBL" id="AP009049">
    <property type="protein sequence ID" value="BAH08122.1"/>
    <property type="molecule type" value="Genomic_DNA"/>
</dbReference>
<dbReference type="RefSeq" id="WP_012103804.1">
    <property type="nucleotide sequence ID" value="NC_011837.1"/>
</dbReference>
<dbReference type="SMR" id="B9DWM9"/>
<dbReference type="KEGG" id="ckr:CKR_3071"/>
<dbReference type="HOGENOM" id="CLU_007764_2_1_9"/>
<dbReference type="Proteomes" id="UP000007969">
    <property type="component" value="Chromosome"/>
</dbReference>
<dbReference type="GO" id="GO:0005829">
    <property type="term" value="C:cytosol"/>
    <property type="evidence" value="ECO:0007669"/>
    <property type="project" value="TreeGrafter"/>
</dbReference>
<dbReference type="GO" id="GO:0003911">
    <property type="term" value="F:DNA ligase (NAD+) activity"/>
    <property type="evidence" value="ECO:0007669"/>
    <property type="project" value="UniProtKB-UniRule"/>
</dbReference>
<dbReference type="GO" id="GO:0046872">
    <property type="term" value="F:metal ion binding"/>
    <property type="evidence" value="ECO:0007669"/>
    <property type="project" value="UniProtKB-KW"/>
</dbReference>
<dbReference type="GO" id="GO:0006281">
    <property type="term" value="P:DNA repair"/>
    <property type="evidence" value="ECO:0007669"/>
    <property type="project" value="UniProtKB-KW"/>
</dbReference>
<dbReference type="GO" id="GO:0006260">
    <property type="term" value="P:DNA replication"/>
    <property type="evidence" value="ECO:0007669"/>
    <property type="project" value="UniProtKB-KW"/>
</dbReference>
<dbReference type="CDD" id="cd00114">
    <property type="entry name" value="LIGANc"/>
    <property type="match status" value="1"/>
</dbReference>
<dbReference type="Gene3D" id="6.20.10.30">
    <property type="match status" value="1"/>
</dbReference>
<dbReference type="Gene3D" id="1.10.150.20">
    <property type="entry name" value="5' to 3' exonuclease, C-terminal subdomain"/>
    <property type="match status" value="2"/>
</dbReference>
<dbReference type="Gene3D" id="3.40.50.10190">
    <property type="entry name" value="BRCT domain"/>
    <property type="match status" value="1"/>
</dbReference>
<dbReference type="Gene3D" id="3.30.470.30">
    <property type="entry name" value="DNA ligase/mRNA capping enzyme"/>
    <property type="match status" value="1"/>
</dbReference>
<dbReference type="Gene3D" id="1.10.287.610">
    <property type="entry name" value="Helix hairpin bin"/>
    <property type="match status" value="1"/>
</dbReference>
<dbReference type="Gene3D" id="2.40.50.140">
    <property type="entry name" value="Nucleic acid-binding proteins"/>
    <property type="match status" value="1"/>
</dbReference>
<dbReference type="HAMAP" id="MF_01588">
    <property type="entry name" value="DNA_ligase_A"/>
    <property type="match status" value="1"/>
</dbReference>
<dbReference type="InterPro" id="IPR001357">
    <property type="entry name" value="BRCT_dom"/>
</dbReference>
<dbReference type="InterPro" id="IPR036420">
    <property type="entry name" value="BRCT_dom_sf"/>
</dbReference>
<dbReference type="InterPro" id="IPR041663">
    <property type="entry name" value="DisA/LigA_HHH"/>
</dbReference>
<dbReference type="InterPro" id="IPR001679">
    <property type="entry name" value="DNA_ligase"/>
</dbReference>
<dbReference type="InterPro" id="IPR013839">
    <property type="entry name" value="DNAligase_adenylation"/>
</dbReference>
<dbReference type="InterPro" id="IPR013840">
    <property type="entry name" value="DNAligase_N"/>
</dbReference>
<dbReference type="InterPro" id="IPR012340">
    <property type="entry name" value="NA-bd_OB-fold"/>
</dbReference>
<dbReference type="InterPro" id="IPR004150">
    <property type="entry name" value="NAD_DNA_ligase_OB"/>
</dbReference>
<dbReference type="InterPro" id="IPR010994">
    <property type="entry name" value="RuvA_2-like"/>
</dbReference>
<dbReference type="InterPro" id="IPR004149">
    <property type="entry name" value="Znf_DNAligase_C4"/>
</dbReference>
<dbReference type="NCBIfam" id="TIGR00575">
    <property type="entry name" value="dnlj"/>
    <property type="match status" value="1"/>
</dbReference>
<dbReference type="NCBIfam" id="NF005932">
    <property type="entry name" value="PRK07956.1"/>
    <property type="match status" value="1"/>
</dbReference>
<dbReference type="PANTHER" id="PTHR23389">
    <property type="entry name" value="CHROMOSOME TRANSMISSION FIDELITY FACTOR 18"/>
    <property type="match status" value="1"/>
</dbReference>
<dbReference type="PANTHER" id="PTHR23389:SF9">
    <property type="entry name" value="DNA LIGASE"/>
    <property type="match status" value="1"/>
</dbReference>
<dbReference type="Pfam" id="PF00533">
    <property type="entry name" value="BRCT"/>
    <property type="match status" value="1"/>
</dbReference>
<dbReference type="Pfam" id="PF01653">
    <property type="entry name" value="DNA_ligase_aden"/>
    <property type="match status" value="1"/>
</dbReference>
<dbReference type="Pfam" id="PF03120">
    <property type="entry name" value="DNA_ligase_OB"/>
    <property type="match status" value="1"/>
</dbReference>
<dbReference type="Pfam" id="PF03119">
    <property type="entry name" value="DNA_ligase_ZBD"/>
    <property type="match status" value="1"/>
</dbReference>
<dbReference type="Pfam" id="PF12826">
    <property type="entry name" value="HHH_2"/>
    <property type="match status" value="1"/>
</dbReference>
<dbReference type="PIRSF" id="PIRSF001604">
    <property type="entry name" value="LigA"/>
    <property type="match status" value="1"/>
</dbReference>
<dbReference type="SMART" id="SM00292">
    <property type="entry name" value="BRCT"/>
    <property type="match status" value="1"/>
</dbReference>
<dbReference type="SMART" id="SM00532">
    <property type="entry name" value="LIGANc"/>
    <property type="match status" value="1"/>
</dbReference>
<dbReference type="SUPFAM" id="SSF52113">
    <property type="entry name" value="BRCT domain"/>
    <property type="match status" value="1"/>
</dbReference>
<dbReference type="SUPFAM" id="SSF56091">
    <property type="entry name" value="DNA ligase/mRNA capping enzyme, catalytic domain"/>
    <property type="match status" value="1"/>
</dbReference>
<dbReference type="SUPFAM" id="SSF50249">
    <property type="entry name" value="Nucleic acid-binding proteins"/>
    <property type="match status" value="1"/>
</dbReference>
<dbReference type="SUPFAM" id="SSF47781">
    <property type="entry name" value="RuvA domain 2-like"/>
    <property type="match status" value="1"/>
</dbReference>
<dbReference type="PROSITE" id="PS50172">
    <property type="entry name" value="BRCT"/>
    <property type="match status" value="1"/>
</dbReference>